<organism>
    <name type="scientific">Lactobacillus johnsonii (strain CNCM I-12250 / La1 / NCC 533)</name>
    <dbReference type="NCBI Taxonomy" id="257314"/>
    <lineage>
        <taxon>Bacteria</taxon>
        <taxon>Bacillati</taxon>
        <taxon>Bacillota</taxon>
        <taxon>Bacilli</taxon>
        <taxon>Lactobacillales</taxon>
        <taxon>Lactobacillaceae</taxon>
        <taxon>Lactobacillus</taxon>
    </lineage>
</organism>
<dbReference type="EMBL" id="AE017198">
    <property type="protein sequence ID" value="AAS08322.1"/>
    <property type="molecule type" value="Genomic_DNA"/>
</dbReference>
<dbReference type="RefSeq" id="WP_004895884.1">
    <property type="nucleotide sequence ID" value="NC_005362.1"/>
</dbReference>
<dbReference type="SMR" id="Q74L91"/>
<dbReference type="GeneID" id="83569751"/>
<dbReference type="KEGG" id="ljo:LJ_0336"/>
<dbReference type="eggNOG" id="COG0049">
    <property type="taxonomic scope" value="Bacteria"/>
</dbReference>
<dbReference type="HOGENOM" id="CLU_072226_1_1_9"/>
<dbReference type="Proteomes" id="UP000000581">
    <property type="component" value="Chromosome"/>
</dbReference>
<dbReference type="GO" id="GO:0015935">
    <property type="term" value="C:small ribosomal subunit"/>
    <property type="evidence" value="ECO:0007669"/>
    <property type="project" value="InterPro"/>
</dbReference>
<dbReference type="GO" id="GO:0019843">
    <property type="term" value="F:rRNA binding"/>
    <property type="evidence" value="ECO:0007669"/>
    <property type="project" value="UniProtKB-UniRule"/>
</dbReference>
<dbReference type="GO" id="GO:0003735">
    <property type="term" value="F:structural constituent of ribosome"/>
    <property type="evidence" value="ECO:0007669"/>
    <property type="project" value="InterPro"/>
</dbReference>
<dbReference type="GO" id="GO:0000049">
    <property type="term" value="F:tRNA binding"/>
    <property type="evidence" value="ECO:0007669"/>
    <property type="project" value="UniProtKB-UniRule"/>
</dbReference>
<dbReference type="GO" id="GO:0006412">
    <property type="term" value="P:translation"/>
    <property type="evidence" value="ECO:0007669"/>
    <property type="project" value="UniProtKB-UniRule"/>
</dbReference>
<dbReference type="CDD" id="cd14869">
    <property type="entry name" value="uS7_Bacteria"/>
    <property type="match status" value="1"/>
</dbReference>
<dbReference type="FunFam" id="1.10.455.10:FF:000001">
    <property type="entry name" value="30S ribosomal protein S7"/>
    <property type="match status" value="1"/>
</dbReference>
<dbReference type="Gene3D" id="1.10.455.10">
    <property type="entry name" value="Ribosomal protein S7 domain"/>
    <property type="match status" value="1"/>
</dbReference>
<dbReference type="HAMAP" id="MF_00480_B">
    <property type="entry name" value="Ribosomal_uS7_B"/>
    <property type="match status" value="1"/>
</dbReference>
<dbReference type="InterPro" id="IPR000235">
    <property type="entry name" value="Ribosomal_uS7"/>
</dbReference>
<dbReference type="InterPro" id="IPR005717">
    <property type="entry name" value="Ribosomal_uS7_bac/org-type"/>
</dbReference>
<dbReference type="InterPro" id="IPR020606">
    <property type="entry name" value="Ribosomal_uS7_CS"/>
</dbReference>
<dbReference type="InterPro" id="IPR023798">
    <property type="entry name" value="Ribosomal_uS7_dom"/>
</dbReference>
<dbReference type="InterPro" id="IPR036823">
    <property type="entry name" value="Ribosomal_uS7_dom_sf"/>
</dbReference>
<dbReference type="NCBIfam" id="TIGR01029">
    <property type="entry name" value="rpsG_bact"/>
    <property type="match status" value="1"/>
</dbReference>
<dbReference type="PANTHER" id="PTHR11205">
    <property type="entry name" value="RIBOSOMAL PROTEIN S7"/>
    <property type="match status" value="1"/>
</dbReference>
<dbReference type="Pfam" id="PF00177">
    <property type="entry name" value="Ribosomal_S7"/>
    <property type="match status" value="1"/>
</dbReference>
<dbReference type="PIRSF" id="PIRSF002122">
    <property type="entry name" value="RPS7p_RPS7a_RPS5e_RPS7o"/>
    <property type="match status" value="1"/>
</dbReference>
<dbReference type="SUPFAM" id="SSF47973">
    <property type="entry name" value="Ribosomal protein S7"/>
    <property type="match status" value="1"/>
</dbReference>
<dbReference type="PROSITE" id="PS00052">
    <property type="entry name" value="RIBOSOMAL_S7"/>
    <property type="match status" value="1"/>
</dbReference>
<proteinExistence type="inferred from homology"/>
<name>RS7_LACJO</name>
<gene>
    <name evidence="1" type="primary">rpsG</name>
    <name type="ordered locus">LJ_0336</name>
</gene>
<comment type="function">
    <text evidence="1">One of the primary rRNA binding proteins, it binds directly to 16S rRNA where it nucleates assembly of the head domain of the 30S subunit. Is located at the subunit interface close to the decoding center, probably blocks exit of the E-site tRNA.</text>
</comment>
<comment type="subunit">
    <text evidence="1">Part of the 30S ribosomal subunit. Contacts proteins S9 and S11.</text>
</comment>
<comment type="similarity">
    <text evidence="1">Belongs to the universal ribosomal protein uS7 family.</text>
</comment>
<reference key="1">
    <citation type="journal article" date="2004" name="Proc. Natl. Acad. Sci. U.S.A.">
        <title>The genome sequence of the probiotic intestinal bacterium Lactobacillus johnsonii NCC 533.</title>
        <authorList>
            <person name="Pridmore R.D."/>
            <person name="Berger B."/>
            <person name="Desiere F."/>
            <person name="Vilanova D."/>
            <person name="Barretto C."/>
            <person name="Pittet A.-C."/>
            <person name="Zwahlen M.-C."/>
            <person name="Rouvet M."/>
            <person name="Altermann E."/>
            <person name="Barrangou R."/>
            <person name="Mollet B."/>
            <person name="Mercenier A."/>
            <person name="Klaenhammer T."/>
            <person name="Arigoni F."/>
            <person name="Schell M.A."/>
        </authorList>
    </citation>
    <scope>NUCLEOTIDE SEQUENCE [LARGE SCALE GENOMIC DNA]</scope>
    <source>
        <strain>CNCM I-1225 / La1 / NCC 533</strain>
    </source>
</reference>
<accession>Q74L91</accession>
<feature type="chain" id="PRO_0000124276" description="Small ribosomal subunit protein uS7">
    <location>
        <begin position="1"/>
        <end position="156"/>
    </location>
</feature>
<sequence>MPRKGNIAKRDVLADPVYNSKLVTKLINHLMIDGKKAKASSILYDAFGIIQDKTGKEPVEVFEEAMNNVMPVLEVKARRIGGSNYQIPVEVRPERRTTLGLRWLVSYARLRNEHTMDERLANEIMDAANNTGSAVKKREDVHRMAEANRAFAHYRF</sequence>
<protein>
    <recommendedName>
        <fullName evidence="1">Small ribosomal subunit protein uS7</fullName>
    </recommendedName>
    <alternativeName>
        <fullName evidence="2">30S ribosomal protein S7</fullName>
    </alternativeName>
</protein>
<evidence type="ECO:0000255" key="1">
    <source>
        <dbReference type="HAMAP-Rule" id="MF_00480"/>
    </source>
</evidence>
<evidence type="ECO:0000305" key="2"/>
<keyword id="KW-0687">Ribonucleoprotein</keyword>
<keyword id="KW-0689">Ribosomal protein</keyword>
<keyword id="KW-0694">RNA-binding</keyword>
<keyword id="KW-0699">rRNA-binding</keyword>
<keyword id="KW-0820">tRNA-binding</keyword>